<dbReference type="EMBL" id="AP009044">
    <property type="protein sequence ID" value="BAF55448.1"/>
    <property type="molecule type" value="Genomic_DNA"/>
</dbReference>
<dbReference type="RefSeq" id="WP_003857951.1">
    <property type="nucleotide sequence ID" value="NC_009342.1"/>
</dbReference>
<dbReference type="SMR" id="A4QGT2"/>
<dbReference type="GeneID" id="1020479"/>
<dbReference type="KEGG" id="cgt:cgR_2438"/>
<dbReference type="HOGENOM" id="CLU_114845_0_1_11"/>
<dbReference type="PhylomeDB" id="A4QGT2"/>
<dbReference type="Proteomes" id="UP000006698">
    <property type="component" value="Chromosome"/>
</dbReference>
<dbReference type="GO" id="GO:0010181">
    <property type="term" value="F:FMN binding"/>
    <property type="evidence" value="ECO:0007669"/>
    <property type="project" value="InterPro"/>
</dbReference>
<dbReference type="GO" id="GO:0036211">
    <property type="term" value="P:protein modification process"/>
    <property type="evidence" value="ECO:0007669"/>
    <property type="project" value="InterPro"/>
</dbReference>
<dbReference type="Gene3D" id="3.40.50.360">
    <property type="match status" value="1"/>
</dbReference>
<dbReference type="HAMAP" id="MF_00128">
    <property type="entry name" value="NrdI"/>
    <property type="match status" value="1"/>
</dbReference>
<dbReference type="InterPro" id="IPR029039">
    <property type="entry name" value="Flavoprotein-like_sf"/>
</dbReference>
<dbReference type="InterPro" id="IPR020852">
    <property type="entry name" value="RNR_Ib_NrdI_bac"/>
</dbReference>
<dbReference type="InterPro" id="IPR004465">
    <property type="entry name" value="RNR_NrdI"/>
</dbReference>
<dbReference type="NCBIfam" id="TIGR00333">
    <property type="entry name" value="nrdI"/>
    <property type="match status" value="1"/>
</dbReference>
<dbReference type="PANTHER" id="PTHR37297">
    <property type="entry name" value="PROTEIN NRDI"/>
    <property type="match status" value="1"/>
</dbReference>
<dbReference type="PANTHER" id="PTHR37297:SF1">
    <property type="entry name" value="PROTEIN NRDI"/>
    <property type="match status" value="1"/>
</dbReference>
<dbReference type="Pfam" id="PF07972">
    <property type="entry name" value="Flavodoxin_NdrI"/>
    <property type="match status" value="1"/>
</dbReference>
<dbReference type="PIRSF" id="PIRSF005087">
    <property type="entry name" value="NrdI"/>
    <property type="match status" value="1"/>
</dbReference>
<dbReference type="SUPFAM" id="SSF52218">
    <property type="entry name" value="Flavoproteins"/>
    <property type="match status" value="1"/>
</dbReference>
<feature type="chain" id="PRO_1000016498" description="Protein NrdI">
    <location>
        <begin position="1"/>
        <end position="148"/>
    </location>
</feature>
<gene>
    <name evidence="1" type="primary">nrdI</name>
    <name type="ordered locus">cgR_2438</name>
</gene>
<organism>
    <name type="scientific">Corynebacterium glutamicum (strain R)</name>
    <dbReference type="NCBI Taxonomy" id="340322"/>
    <lineage>
        <taxon>Bacteria</taxon>
        <taxon>Bacillati</taxon>
        <taxon>Actinomycetota</taxon>
        <taxon>Actinomycetes</taxon>
        <taxon>Mycobacteriales</taxon>
        <taxon>Corynebacteriaceae</taxon>
        <taxon>Corynebacterium</taxon>
    </lineage>
</organism>
<proteinExistence type="inferred from homology"/>
<sequence length="148" mass="16409">MLIVYFSSATDNTHRFVQKLDLPNVRIPLTRVEEPLKINEPYVLITPTYGGGVSMTGENSRPVPPQVIRFLNDEHNRSFIRAVVAGGNSNFGSDFGLAGEIISKKCKVPYVYRFELMGNEEDVSILRGGLTQNAQALGLEPQEPVTSR</sequence>
<protein>
    <recommendedName>
        <fullName evidence="1">Protein NrdI</fullName>
    </recommendedName>
</protein>
<reference key="1">
    <citation type="journal article" date="2007" name="Microbiology">
        <title>Comparative analysis of the Corynebacterium glutamicum group and complete genome sequence of strain R.</title>
        <authorList>
            <person name="Yukawa H."/>
            <person name="Omumasaba C.A."/>
            <person name="Nonaka H."/>
            <person name="Kos P."/>
            <person name="Okai N."/>
            <person name="Suzuki N."/>
            <person name="Suda M."/>
            <person name="Tsuge Y."/>
            <person name="Watanabe J."/>
            <person name="Ikeda Y."/>
            <person name="Vertes A.A."/>
            <person name="Inui M."/>
        </authorList>
    </citation>
    <scope>NUCLEOTIDE SEQUENCE [LARGE SCALE GENOMIC DNA]</scope>
    <source>
        <strain>R</strain>
    </source>
</reference>
<comment type="function">
    <text evidence="1">Probably involved in ribonucleotide reductase function.</text>
</comment>
<comment type="similarity">
    <text evidence="1">Belongs to the NrdI family.</text>
</comment>
<accession>A4QGT2</accession>
<name>NRDI_CORGB</name>
<evidence type="ECO:0000255" key="1">
    <source>
        <dbReference type="HAMAP-Rule" id="MF_00128"/>
    </source>
</evidence>